<comment type="function">
    <text evidence="1">Required for rescue of stalled ribosomes mediated by trans-translation. Binds to transfer-messenger RNA (tmRNA), required for stable association of tmRNA with ribosomes. tmRNA and SmpB together mimic tRNA shape, replacing the anticodon stem-loop with SmpB. tmRNA is encoded by the ssrA gene; the 2 termini fold to resemble tRNA(Ala) and it encodes a 'tag peptide', a short internal open reading frame. During trans-translation Ala-aminoacylated tmRNA acts like a tRNA, entering the A-site of stalled ribosomes, displacing the stalled mRNA. The ribosome then switches to translate the ORF on the tmRNA; the nascent peptide is terminated with the 'tag peptide' encoded by the tmRNA and targeted for degradation. The ribosome is freed to recommence translation, which seems to be the essential function of trans-translation.</text>
</comment>
<comment type="subcellular location">
    <subcellularLocation>
        <location evidence="1">Cytoplasm</location>
    </subcellularLocation>
    <text evidence="1">The tmRNA-SmpB complex associates with stalled 70S ribosomes.</text>
</comment>
<comment type="similarity">
    <text evidence="1">Belongs to the SmpB family.</text>
</comment>
<organism>
    <name type="scientific">Flavobacterium johnsoniae (strain ATCC 17061 / DSM 2064 / JCM 8514 / BCRC 14874 / CCUG 350202 / NBRC 14942 / NCIMB 11054 / UW101)</name>
    <name type="common">Cytophaga johnsonae</name>
    <dbReference type="NCBI Taxonomy" id="376686"/>
    <lineage>
        <taxon>Bacteria</taxon>
        <taxon>Pseudomonadati</taxon>
        <taxon>Bacteroidota</taxon>
        <taxon>Flavobacteriia</taxon>
        <taxon>Flavobacteriales</taxon>
        <taxon>Flavobacteriaceae</taxon>
        <taxon>Flavobacterium</taxon>
    </lineage>
</organism>
<feature type="chain" id="PRO_1000074351" description="SsrA-binding protein">
    <location>
        <begin position="1"/>
        <end position="151"/>
    </location>
</feature>
<dbReference type="EMBL" id="CP000685">
    <property type="protein sequence ID" value="ABQ06457.1"/>
    <property type="molecule type" value="Genomic_DNA"/>
</dbReference>
<dbReference type="RefSeq" id="WP_012025426.1">
    <property type="nucleotide sequence ID" value="NC_009441.1"/>
</dbReference>
<dbReference type="SMR" id="A5FEB8"/>
<dbReference type="STRING" id="376686.Fjoh_3443"/>
<dbReference type="KEGG" id="fjo:Fjoh_3443"/>
<dbReference type="eggNOG" id="COG0691">
    <property type="taxonomic scope" value="Bacteria"/>
</dbReference>
<dbReference type="HOGENOM" id="CLU_108953_0_1_10"/>
<dbReference type="OrthoDB" id="9805462at2"/>
<dbReference type="Proteomes" id="UP000006694">
    <property type="component" value="Chromosome"/>
</dbReference>
<dbReference type="GO" id="GO:0005829">
    <property type="term" value="C:cytosol"/>
    <property type="evidence" value="ECO:0007669"/>
    <property type="project" value="TreeGrafter"/>
</dbReference>
<dbReference type="GO" id="GO:0003723">
    <property type="term" value="F:RNA binding"/>
    <property type="evidence" value="ECO:0007669"/>
    <property type="project" value="UniProtKB-UniRule"/>
</dbReference>
<dbReference type="GO" id="GO:0070929">
    <property type="term" value="P:trans-translation"/>
    <property type="evidence" value="ECO:0007669"/>
    <property type="project" value="UniProtKB-UniRule"/>
</dbReference>
<dbReference type="CDD" id="cd09294">
    <property type="entry name" value="SmpB"/>
    <property type="match status" value="1"/>
</dbReference>
<dbReference type="Gene3D" id="2.40.280.10">
    <property type="match status" value="1"/>
</dbReference>
<dbReference type="HAMAP" id="MF_00023">
    <property type="entry name" value="SmpB"/>
    <property type="match status" value="1"/>
</dbReference>
<dbReference type="InterPro" id="IPR023620">
    <property type="entry name" value="SmpB"/>
</dbReference>
<dbReference type="InterPro" id="IPR000037">
    <property type="entry name" value="SsrA-bd_prot"/>
</dbReference>
<dbReference type="InterPro" id="IPR020081">
    <property type="entry name" value="SsrA-bd_prot_CS"/>
</dbReference>
<dbReference type="NCBIfam" id="NF003843">
    <property type="entry name" value="PRK05422.1"/>
    <property type="match status" value="1"/>
</dbReference>
<dbReference type="NCBIfam" id="TIGR00086">
    <property type="entry name" value="smpB"/>
    <property type="match status" value="1"/>
</dbReference>
<dbReference type="PANTHER" id="PTHR30308:SF2">
    <property type="entry name" value="SSRA-BINDING PROTEIN"/>
    <property type="match status" value="1"/>
</dbReference>
<dbReference type="PANTHER" id="PTHR30308">
    <property type="entry name" value="TMRNA-BINDING COMPONENT OF TRANS-TRANSLATION TAGGING COMPLEX"/>
    <property type="match status" value="1"/>
</dbReference>
<dbReference type="Pfam" id="PF01668">
    <property type="entry name" value="SmpB"/>
    <property type="match status" value="1"/>
</dbReference>
<dbReference type="SUPFAM" id="SSF74982">
    <property type="entry name" value="Small protein B (SmpB)"/>
    <property type="match status" value="1"/>
</dbReference>
<dbReference type="PROSITE" id="PS01317">
    <property type="entry name" value="SSRP"/>
    <property type="match status" value="1"/>
</dbReference>
<evidence type="ECO:0000255" key="1">
    <source>
        <dbReference type="HAMAP-Rule" id="MF_00023"/>
    </source>
</evidence>
<sequence length="151" mass="17365">MLKSVNILNKRARFDYEIIDTYTAGIVLAGTEIKSIRLGKANITESFCEFSGIELFAINTYIEEYSFGNQFNHKSRSERKLLLNKKELKSLHKSVQAKGLTIVPLKLFTNEKGLAKLQIGLCKGKKNYDKRESLKEQDTKRDLDRIKKAYN</sequence>
<keyword id="KW-0963">Cytoplasm</keyword>
<keyword id="KW-0694">RNA-binding</keyword>
<reference key="1">
    <citation type="journal article" date="2009" name="Appl. Environ. Microbiol.">
        <title>Novel features of the polysaccharide-digesting gliding bacterium Flavobacterium johnsoniae as revealed by genome sequence analysis.</title>
        <authorList>
            <person name="McBride M.J."/>
            <person name="Xie G."/>
            <person name="Martens E.C."/>
            <person name="Lapidus A."/>
            <person name="Henrissat B."/>
            <person name="Rhodes R.G."/>
            <person name="Goltsman E."/>
            <person name="Wang W."/>
            <person name="Xu J."/>
            <person name="Hunnicutt D.W."/>
            <person name="Staroscik A.M."/>
            <person name="Hoover T.R."/>
            <person name="Cheng Y.Q."/>
            <person name="Stein J.L."/>
        </authorList>
    </citation>
    <scope>NUCLEOTIDE SEQUENCE [LARGE SCALE GENOMIC DNA]</scope>
    <source>
        <strain>ATCC 17061 / DSM 2064 / JCM 8514 / BCRC 14874 / CCUG 350202 / NBRC 14942 / NCIMB 11054 / UW101</strain>
    </source>
</reference>
<accession>A5FEB8</accession>
<proteinExistence type="inferred from homology"/>
<protein>
    <recommendedName>
        <fullName evidence="1">SsrA-binding protein</fullName>
    </recommendedName>
    <alternativeName>
        <fullName evidence="1">Small protein B</fullName>
    </alternativeName>
</protein>
<gene>
    <name evidence="1" type="primary">smpB</name>
    <name type="ordered locus">Fjoh_3443</name>
</gene>
<name>SSRP_FLAJ1</name>